<reference key="1">
    <citation type="journal article" date="1984" name="Virology">
        <title>Nucleotide sequence of the thymidine kinase gene region of monkeypox and variola viruses.</title>
        <authorList>
            <person name="Esposito J.J."/>
            <person name="Knight J.C."/>
        </authorList>
    </citation>
    <scope>NUCLEOTIDE SEQUENCE [GENOMIC DNA]</scope>
</reference>
<reference key="2">
    <citation type="journal article" date="2001" name="FEBS Lett.">
        <title>Human monkeypox and smallpox viruses: genomic comparison.</title>
        <authorList>
            <person name="Shchelkunov S.N."/>
            <person name="Totmenin A.V."/>
            <person name="Babkin I.V."/>
            <person name="Safronov P.F."/>
            <person name="Ryazankina O.I."/>
            <person name="Petrov N.A."/>
            <person name="Gutorov V.V."/>
            <person name="Uvarova E.A."/>
            <person name="Mikheev M.V."/>
            <person name="Sisler J.R."/>
            <person name="Esposito J.J."/>
            <person name="Jahrling P.B."/>
            <person name="Moss B."/>
            <person name="Sandakhchiev L.S."/>
        </authorList>
    </citation>
    <scope>NUCLEOTIDE SEQUENCE [GENOMIC DNA]</scope>
    <source>
        <strain>Isolate Zaire-96-I-16</strain>
    </source>
</reference>
<protein>
    <recommendedName>
        <fullName>Thymidine kinase</fullName>
        <ecNumber>2.7.1.21</ecNumber>
    </recommendedName>
</protein>
<evidence type="ECO:0000250" key="1"/>
<evidence type="ECO:0000250" key="2">
    <source>
        <dbReference type="UniProtKB" id="O57203"/>
    </source>
</evidence>
<evidence type="ECO:0000305" key="3"/>
<keyword id="KW-0067">ATP-binding</keyword>
<keyword id="KW-1015">Disulfide bond</keyword>
<keyword id="KW-0237">DNA synthesis</keyword>
<keyword id="KW-0418">Kinase</keyword>
<keyword id="KW-0479">Metal-binding</keyword>
<keyword id="KW-0547">Nucleotide-binding</keyword>
<keyword id="KW-0808">Transferase</keyword>
<keyword id="KW-0862">Zinc</keyword>
<sequence>MNGGHIQLIIGPMLSGKSTELIRRVRRYQIAQYKCVTIKYSNDNRYGTGLWTHDKNNFAALEVTKLCDVLEAITDFSVIGIDEGQFFPDIVEFCERMANEGKIVIVAALDGTFQRRPFNNILNLIPLSEMVVKLTAVCMKCFKEASFSKRLGAETEIEIIGGNDMYQSVCRKCYIDS</sequence>
<name>KITH_MONPZ</name>
<organism>
    <name type="scientific">Monkeypox virus (strain Zaire-96-I-16)</name>
    <name type="common">MPX</name>
    <dbReference type="NCBI Taxonomy" id="619591"/>
    <lineage>
        <taxon>Viruses</taxon>
        <taxon>Varidnaviria</taxon>
        <taxon>Bamfordvirae</taxon>
        <taxon>Nucleocytoviricota</taxon>
        <taxon>Pokkesviricetes</taxon>
        <taxon>Chitovirales</taxon>
        <taxon>Poxviridae</taxon>
        <taxon>Chordopoxvirinae</taxon>
        <taxon>Orthopoxvirus</taxon>
        <taxon>Monkeypox virus</taxon>
    </lineage>
</organism>
<comment type="function">
    <text evidence="2">Phosphorylates thymidine and thymidine analogs, such as azidothymidine (AZT). Part of the salvage pathway for pyrimidine deoxyribonucleotide synthesis.</text>
</comment>
<comment type="catalytic activity">
    <reaction evidence="2">
        <text>thymidine + ATP = dTMP + ADP + H(+)</text>
        <dbReference type="Rhea" id="RHEA:19129"/>
        <dbReference type="ChEBI" id="CHEBI:15378"/>
        <dbReference type="ChEBI" id="CHEBI:17748"/>
        <dbReference type="ChEBI" id="CHEBI:30616"/>
        <dbReference type="ChEBI" id="CHEBI:63528"/>
        <dbReference type="ChEBI" id="CHEBI:456216"/>
        <dbReference type="EC" id="2.7.1.21"/>
    </reaction>
</comment>
<comment type="subunit">
    <text evidence="1">Homotetramer. Two molecules of substrate bind to each enzyme tetramer.</text>
</comment>
<comment type="similarity">
    <text evidence="3">Belongs to the thymidine kinase family.</text>
</comment>
<proteinExistence type="inferred from homology"/>
<accession>P04363</accession>
<accession>Q8V4Z6</accession>
<feature type="chain" id="PRO_0000174931" description="Thymidine kinase">
    <location>
        <begin position="1"/>
        <end position="177"/>
    </location>
</feature>
<feature type="active site" description="Proton acceptor" evidence="2">
    <location>
        <position position="83"/>
    </location>
</feature>
<feature type="binding site" evidence="2">
    <location>
        <begin position="11"/>
        <end position="18"/>
    </location>
    <ligand>
        <name>ATP</name>
        <dbReference type="ChEBI" id="CHEBI:30616"/>
    </ligand>
</feature>
<feature type="binding site" evidence="2">
    <location>
        <position position="113"/>
    </location>
    <ligand>
        <name>substrate</name>
    </ligand>
</feature>
<feature type="binding site" evidence="2">
    <location>
        <position position="138"/>
    </location>
    <ligand>
        <name>Zn(2+)</name>
        <dbReference type="ChEBI" id="CHEBI:29105"/>
    </ligand>
</feature>
<feature type="binding site" evidence="2">
    <location>
        <position position="141"/>
    </location>
    <ligand>
        <name>Zn(2+)</name>
        <dbReference type="ChEBI" id="CHEBI:29105"/>
    </ligand>
</feature>
<feature type="binding site" evidence="2">
    <location>
        <begin position="157"/>
        <end position="161"/>
    </location>
    <ligand>
        <name>substrate</name>
    </ligand>
</feature>
<feature type="binding site" evidence="2">
    <location>
        <position position="170"/>
    </location>
    <ligand>
        <name>Zn(2+)</name>
        <dbReference type="ChEBI" id="CHEBI:29105"/>
    </ligand>
</feature>
<feature type="binding site" evidence="2">
    <location>
        <position position="173"/>
    </location>
    <ligand>
        <name>Zn(2+)</name>
        <dbReference type="ChEBI" id="CHEBI:29105"/>
    </ligand>
</feature>
<feature type="disulfide bond" description="Interchain (with C-173)" evidence="2">
    <location>
        <position position="170"/>
    </location>
</feature>
<feature type="disulfide bond" description="Interchain (with C-170)" evidence="2">
    <location>
        <position position="173"/>
    </location>
</feature>
<feature type="sequence conflict" description="In Ref. 1; AAA80529." evidence="3" ref="1">
    <original>L</original>
    <variation>F</variation>
    <location>
        <position position="14"/>
    </location>
</feature>
<feature type="sequence conflict" description="In Ref. 1; AAA80529." evidence="3" ref="1">
    <original>I</original>
    <variation>V</variation>
    <location>
        <position position="90"/>
    </location>
</feature>
<feature type="sequence conflict" description="In Ref. 1; AAA80529." evidence="3" ref="1">
    <original>A</original>
    <variation>T</variation>
    <location>
        <position position="153"/>
    </location>
</feature>
<gene>
    <name type="primary">OPG101</name>
    <name type="synonym">TK</name>
    <name type="ORF">L2R</name>
</gene>
<dbReference type="EC" id="2.7.1.21"/>
<dbReference type="EMBL" id="K02025">
    <property type="protein sequence ID" value="AAA80529.1"/>
    <property type="molecule type" value="Genomic_DNA"/>
</dbReference>
<dbReference type="EMBL" id="AF380138">
    <property type="protein sequence ID" value="AAL40544.1"/>
    <property type="molecule type" value="Genomic_DNA"/>
</dbReference>
<dbReference type="PIR" id="A00610">
    <property type="entry name" value="KIVZMV"/>
</dbReference>
<dbReference type="RefSeq" id="NP_536513.1">
    <property type="nucleotide sequence ID" value="NC_003310.1"/>
</dbReference>
<dbReference type="SMR" id="P04363"/>
<dbReference type="GeneID" id="928935"/>
<dbReference type="KEGG" id="vg:928935"/>
<dbReference type="Proteomes" id="UP000101269">
    <property type="component" value="Genome"/>
</dbReference>
<dbReference type="GO" id="GO:0005524">
    <property type="term" value="F:ATP binding"/>
    <property type="evidence" value="ECO:0007669"/>
    <property type="project" value="UniProtKB-KW"/>
</dbReference>
<dbReference type="GO" id="GO:0046872">
    <property type="term" value="F:metal ion binding"/>
    <property type="evidence" value="ECO:0007669"/>
    <property type="project" value="UniProtKB-KW"/>
</dbReference>
<dbReference type="GO" id="GO:0004797">
    <property type="term" value="F:thymidine kinase activity"/>
    <property type="evidence" value="ECO:0007669"/>
    <property type="project" value="UniProtKB-EC"/>
</dbReference>
<dbReference type="GO" id="GO:0071897">
    <property type="term" value="P:DNA biosynthetic process"/>
    <property type="evidence" value="ECO:0007669"/>
    <property type="project" value="UniProtKB-KW"/>
</dbReference>
<dbReference type="GO" id="GO:0046104">
    <property type="term" value="P:thymidine metabolic process"/>
    <property type="evidence" value="ECO:0007669"/>
    <property type="project" value="TreeGrafter"/>
</dbReference>
<dbReference type="FunFam" id="3.30.60.20:FF:000028">
    <property type="entry name" value="Thymidine kinase"/>
    <property type="match status" value="1"/>
</dbReference>
<dbReference type="FunFam" id="3.40.50.300:FF:000761">
    <property type="entry name" value="Thymidine kinase"/>
    <property type="match status" value="1"/>
</dbReference>
<dbReference type="Gene3D" id="3.30.60.20">
    <property type="match status" value="1"/>
</dbReference>
<dbReference type="Gene3D" id="3.40.50.300">
    <property type="entry name" value="P-loop containing nucleotide triphosphate hydrolases"/>
    <property type="match status" value="1"/>
</dbReference>
<dbReference type="InterPro" id="IPR027417">
    <property type="entry name" value="P-loop_NTPase"/>
</dbReference>
<dbReference type="InterPro" id="IPR001267">
    <property type="entry name" value="Thymidine_kinase"/>
</dbReference>
<dbReference type="InterPro" id="IPR020633">
    <property type="entry name" value="Thymidine_kinase_CS"/>
</dbReference>
<dbReference type="PANTHER" id="PTHR11441">
    <property type="entry name" value="THYMIDINE KINASE"/>
    <property type="match status" value="1"/>
</dbReference>
<dbReference type="PANTHER" id="PTHR11441:SF0">
    <property type="entry name" value="THYMIDINE KINASE, CYTOSOLIC"/>
    <property type="match status" value="1"/>
</dbReference>
<dbReference type="Pfam" id="PF00265">
    <property type="entry name" value="TK"/>
    <property type="match status" value="1"/>
</dbReference>
<dbReference type="PIRSF" id="PIRSF035805">
    <property type="entry name" value="TK_cell"/>
    <property type="match status" value="1"/>
</dbReference>
<dbReference type="SUPFAM" id="SSF57716">
    <property type="entry name" value="Glucocorticoid receptor-like (DNA-binding domain)"/>
    <property type="match status" value="1"/>
</dbReference>
<dbReference type="SUPFAM" id="SSF52540">
    <property type="entry name" value="P-loop containing nucleoside triphosphate hydrolases"/>
    <property type="match status" value="1"/>
</dbReference>
<dbReference type="PROSITE" id="PS00603">
    <property type="entry name" value="TK_CELLULAR_TYPE"/>
    <property type="match status" value="1"/>
</dbReference>
<organismHost>
    <name type="scientific">Cynomys gunnisoni</name>
    <name type="common">Gunnison's prairie dog</name>
    <name type="synonym">Spermophilus gunnisoni</name>
    <dbReference type="NCBI Taxonomy" id="45479"/>
</organismHost>
<organismHost>
    <name type="scientific">Cynomys leucurus</name>
    <name type="common">White-tailed prairie dog</name>
    <dbReference type="NCBI Taxonomy" id="99825"/>
</organismHost>
<organismHost>
    <name type="scientific">Cynomys ludovicianus</name>
    <name type="common">Black-tailed prairie dog</name>
    <dbReference type="NCBI Taxonomy" id="45480"/>
</organismHost>
<organismHost>
    <name type="scientific">Cynomys mexicanus</name>
    <name type="common">Mexican prairie dog</name>
    <dbReference type="NCBI Taxonomy" id="99826"/>
</organismHost>
<organismHost>
    <name type="scientific">Cynomys parvidens</name>
    <name type="common">Utah prairie dog</name>
    <dbReference type="NCBI Taxonomy" id="99827"/>
</organismHost>
<organismHost>
    <name type="scientific">Gliridae</name>
    <name type="common">dormice</name>
    <dbReference type="NCBI Taxonomy" id="30650"/>
</organismHost>
<organismHost>
    <name type="scientific">Heliosciurus ruwenzorii</name>
    <name type="common">Ruwenzori sun squirrel</name>
    <dbReference type="NCBI Taxonomy" id="226685"/>
</organismHost>
<organismHost>
    <name type="scientific">Homo sapiens</name>
    <name type="common">Human</name>
    <dbReference type="NCBI Taxonomy" id="9606"/>
</organismHost>
<organismHost>
    <name type="scientific">Mus musculus</name>
    <name type="common">Mouse</name>
    <dbReference type="NCBI Taxonomy" id="10090"/>
</organismHost>